<accession>Q4L6Z1</accession>
<name>RL27_STAHJ</name>
<dbReference type="EMBL" id="AP006716">
    <property type="protein sequence ID" value="BAE04584.1"/>
    <property type="molecule type" value="Genomic_DNA"/>
</dbReference>
<dbReference type="RefSeq" id="WP_011275573.1">
    <property type="nucleotide sequence ID" value="NC_007168.1"/>
</dbReference>
<dbReference type="SMR" id="Q4L6Z1"/>
<dbReference type="GeneID" id="93780678"/>
<dbReference type="KEGG" id="sha:SH1275"/>
<dbReference type="eggNOG" id="COG0211">
    <property type="taxonomic scope" value="Bacteria"/>
</dbReference>
<dbReference type="HOGENOM" id="CLU_095424_4_0_9"/>
<dbReference type="OrthoDB" id="9803474at2"/>
<dbReference type="Proteomes" id="UP000000543">
    <property type="component" value="Chromosome"/>
</dbReference>
<dbReference type="GO" id="GO:0022625">
    <property type="term" value="C:cytosolic large ribosomal subunit"/>
    <property type="evidence" value="ECO:0007669"/>
    <property type="project" value="TreeGrafter"/>
</dbReference>
<dbReference type="GO" id="GO:0003735">
    <property type="term" value="F:structural constituent of ribosome"/>
    <property type="evidence" value="ECO:0007669"/>
    <property type="project" value="InterPro"/>
</dbReference>
<dbReference type="GO" id="GO:0006412">
    <property type="term" value="P:translation"/>
    <property type="evidence" value="ECO:0007669"/>
    <property type="project" value="UniProtKB-UniRule"/>
</dbReference>
<dbReference type="FunFam" id="2.40.50.100:FF:000004">
    <property type="entry name" value="50S ribosomal protein L27"/>
    <property type="match status" value="1"/>
</dbReference>
<dbReference type="Gene3D" id="2.40.50.100">
    <property type="match status" value="1"/>
</dbReference>
<dbReference type="HAMAP" id="MF_00539">
    <property type="entry name" value="Ribosomal_bL27"/>
    <property type="match status" value="1"/>
</dbReference>
<dbReference type="InterPro" id="IPR001684">
    <property type="entry name" value="Ribosomal_bL27"/>
</dbReference>
<dbReference type="InterPro" id="IPR018261">
    <property type="entry name" value="Ribosomal_bL27_CS"/>
</dbReference>
<dbReference type="NCBIfam" id="TIGR00062">
    <property type="entry name" value="L27"/>
    <property type="match status" value="1"/>
</dbReference>
<dbReference type="PANTHER" id="PTHR15893:SF0">
    <property type="entry name" value="LARGE RIBOSOMAL SUBUNIT PROTEIN BL27M"/>
    <property type="match status" value="1"/>
</dbReference>
<dbReference type="PANTHER" id="PTHR15893">
    <property type="entry name" value="RIBOSOMAL PROTEIN L27"/>
    <property type="match status" value="1"/>
</dbReference>
<dbReference type="Pfam" id="PF01016">
    <property type="entry name" value="Ribosomal_L27"/>
    <property type="match status" value="1"/>
</dbReference>
<dbReference type="PRINTS" id="PR00063">
    <property type="entry name" value="RIBOSOMALL27"/>
</dbReference>
<dbReference type="SUPFAM" id="SSF110324">
    <property type="entry name" value="Ribosomal L27 protein-like"/>
    <property type="match status" value="1"/>
</dbReference>
<dbReference type="PROSITE" id="PS00831">
    <property type="entry name" value="RIBOSOMAL_L27"/>
    <property type="match status" value="1"/>
</dbReference>
<feature type="propeptide" id="PRO_0000459943" evidence="1">
    <location>
        <begin position="1"/>
        <end position="9"/>
    </location>
</feature>
<feature type="chain" id="PRO_1000017621" description="Large ribosomal subunit protein bL27">
    <location>
        <begin position="10"/>
        <end position="94"/>
    </location>
</feature>
<organism>
    <name type="scientific">Staphylococcus haemolyticus (strain JCSC1435)</name>
    <dbReference type="NCBI Taxonomy" id="279808"/>
    <lineage>
        <taxon>Bacteria</taxon>
        <taxon>Bacillati</taxon>
        <taxon>Bacillota</taxon>
        <taxon>Bacilli</taxon>
        <taxon>Bacillales</taxon>
        <taxon>Staphylococcaceae</taxon>
        <taxon>Staphylococcus</taxon>
    </lineage>
</organism>
<comment type="PTM">
    <text evidence="1">The N-terminus is cleaved by ribosomal processing cysteine protease Prp.</text>
</comment>
<comment type="similarity">
    <text evidence="2">Belongs to the bacterial ribosomal protein bL27 family.</text>
</comment>
<sequence length="94" mass="10359">MLKLNLQFFASKKGVSSTKNGRDSESKRLGAKRADGQYVTGGSILYRQRGTKIYPGENVGRGGDDTLFAKIDGVVRFERKGRDKKQVSVYAVAE</sequence>
<reference key="1">
    <citation type="journal article" date="2005" name="J. Bacteriol.">
        <title>Whole-genome sequencing of Staphylococcus haemolyticus uncovers the extreme plasticity of its genome and the evolution of human-colonizing staphylococcal species.</title>
        <authorList>
            <person name="Takeuchi F."/>
            <person name="Watanabe S."/>
            <person name="Baba T."/>
            <person name="Yuzawa H."/>
            <person name="Ito T."/>
            <person name="Morimoto Y."/>
            <person name="Kuroda M."/>
            <person name="Cui L."/>
            <person name="Takahashi M."/>
            <person name="Ankai A."/>
            <person name="Baba S."/>
            <person name="Fukui S."/>
            <person name="Lee J.C."/>
            <person name="Hiramatsu K."/>
        </authorList>
    </citation>
    <scope>NUCLEOTIDE SEQUENCE [LARGE SCALE GENOMIC DNA]</scope>
    <source>
        <strain>JCSC1435</strain>
    </source>
</reference>
<proteinExistence type="inferred from homology"/>
<evidence type="ECO:0000250" key="1">
    <source>
        <dbReference type="UniProtKB" id="Q2FXT0"/>
    </source>
</evidence>
<evidence type="ECO:0000255" key="2">
    <source>
        <dbReference type="HAMAP-Rule" id="MF_00539"/>
    </source>
</evidence>
<evidence type="ECO:0000305" key="3"/>
<keyword id="KW-0687">Ribonucleoprotein</keyword>
<keyword id="KW-0689">Ribosomal protein</keyword>
<protein>
    <recommendedName>
        <fullName evidence="2">Large ribosomal subunit protein bL27</fullName>
    </recommendedName>
    <alternativeName>
        <fullName evidence="3">50S ribosomal protein L27</fullName>
    </alternativeName>
</protein>
<gene>
    <name evidence="2" type="primary">rpmA</name>
    <name type="ordered locus">SH1275</name>
</gene>